<feature type="chain" id="PRO_0000146256" description="Small ribosomal subunit protein uS12">
    <location>
        <begin position="1"/>
        <end position="124"/>
    </location>
</feature>
<feature type="region of interest" description="Disordered" evidence="3">
    <location>
        <begin position="105"/>
        <end position="124"/>
    </location>
</feature>
<feature type="compositionally biased region" description="Basic residues" evidence="3">
    <location>
        <begin position="108"/>
        <end position="118"/>
    </location>
</feature>
<feature type="modified residue" description="3-methylthioaspartic acid" evidence="1">
    <location>
        <position position="89"/>
    </location>
</feature>
<feature type="sequence conflict" description="In Ref. 2; CAB56845." evidence="4" ref="2">
    <original>G</original>
    <variation>V</variation>
    <location>
        <position position="11"/>
    </location>
</feature>
<feature type="sequence conflict" description="In Ref. 2; CAB56845." evidence="4" ref="2">
    <original>I</original>
    <variation>V</variation>
    <location>
        <position position="16"/>
    </location>
</feature>
<gene>
    <name evidence="2" type="primary">rpsL</name>
</gene>
<sequence length="124" mass="13849">MPTIQQLVRKGRRDKIGKVKTAALKGSPQRRGVCTRVYTTTPKKPNSALRKVARVKLTSQVEVTAYIPGEGHNLQEHSMVLVRGGRVKDLPGVRYKIIRGSLDTQGVKNRKQARSRYGAKKEKS</sequence>
<protein>
    <recommendedName>
        <fullName evidence="2">Small ribosomal subunit protein uS12</fullName>
    </recommendedName>
    <alternativeName>
        <fullName evidence="4">30S ribosomal protein S12</fullName>
    </alternativeName>
</protein>
<evidence type="ECO:0000250" key="1"/>
<evidence type="ECO:0000255" key="2">
    <source>
        <dbReference type="HAMAP-Rule" id="MF_00403"/>
    </source>
</evidence>
<evidence type="ECO:0000256" key="3">
    <source>
        <dbReference type="SAM" id="MobiDB-lite"/>
    </source>
</evidence>
<evidence type="ECO:0000305" key="4"/>
<organism>
    <name type="scientific">Mycobacterium avium</name>
    <dbReference type="NCBI Taxonomy" id="1764"/>
    <lineage>
        <taxon>Bacteria</taxon>
        <taxon>Bacillati</taxon>
        <taxon>Actinomycetota</taxon>
        <taxon>Actinomycetes</taxon>
        <taxon>Mycobacteriales</taxon>
        <taxon>Mycobacteriaceae</taxon>
        <taxon>Mycobacterium</taxon>
        <taxon>Mycobacterium avium complex (MAC)</taxon>
    </lineage>
</organism>
<reference key="1">
    <citation type="journal article" date="1995" name="J. Antimicrob. Chemother.">
        <title>The absence of genetic markers for streptomycin and rifampicin resistance in Mycobacterium avium complex strains.</title>
        <authorList>
            <person name="Portillo-Gomez L."/>
            <person name="Nair J."/>
            <person name="Rouse D.A."/>
            <person name="Morris S.L."/>
        </authorList>
    </citation>
    <scope>NUCLEOTIDE SEQUENCE [GENOMIC DNA]</scope>
    <source>
        <strain>35713</strain>
    </source>
</reference>
<reference key="2">
    <citation type="journal article" date="1994" name="Antimicrob. Agents Chemother.">
        <title>Streptomycin resistance in mycobacteria.</title>
        <authorList>
            <person name="Honore N."/>
            <person name="Cole S.T."/>
        </authorList>
    </citation>
    <scope>NUCLEOTIDE SEQUENCE [GENOMIC DNA] OF 9-96</scope>
    <source>
        <strain>ATCC 2591</strain>
    </source>
</reference>
<proteinExistence type="inferred from homology"/>
<comment type="function">
    <text evidence="2">With S4 and S5 plays an important role in translational accuracy.</text>
</comment>
<comment type="function">
    <text evidence="2">Interacts with and stabilizes bases of the 16S rRNA that are involved in tRNA selection in the A site and with the mRNA backbone. Located at the interface of the 30S and 50S subunits, it traverses the body of the 30S subunit contacting proteins on the other side and probably holding the rRNA structure together. The combined cluster of proteins S8, S12 and S17 appears to hold together the shoulder and platform of the 30S subunit.</text>
</comment>
<comment type="subunit">
    <text evidence="2">Part of the 30S ribosomal subunit. Contacts proteins S8 and S17. May interact with IF1 in the 30S initiation complex.</text>
</comment>
<comment type="similarity">
    <text evidence="2">Belongs to the universal ribosomal protein uS12 family.</text>
</comment>
<dbReference type="EMBL" id="X80120">
    <property type="protein sequence ID" value="CAB56845.1"/>
    <property type="molecule type" value="Genomic_DNA"/>
</dbReference>
<dbReference type="RefSeq" id="WP_003879423.1">
    <property type="nucleotide sequence ID" value="NZ_NSFM01000032.1"/>
</dbReference>
<dbReference type="SMR" id="P51999"/>
<dbReference type="GeneID" id="93493130"/>
<dbReference type="OMA" id="VCIRVYT"/>
<dbReference type="OrthoDB" id="9802366at2"/>
<dbReference type="GO" id="GO:0015935">
    <property type="term" value="C:small ribosomal subunit"/>
    <property type="evidence" value="ECO:0007669"/>
    <property type="project" value="InterPro"/>
</dbReference>
<dbReference type="GO" id="GO:0019843">
    <property type="term" value="F:rRNA binding"/>
    <property type="evidence" value="ECO:0007669"/>
    <property type="project" value="UniProtKB-UniRule"/>
</dbReference>
<dbReference type="GO" id="GO:0003735">
    <property type="term" value="F:structural constituent of ribosome"/>
    <property type="evidence" value="ECO:0007669"/>
    <property type="project" value="InterPro"/>
</dbReference>
<dbReference type="GO" id="GO:0000049">
    <property type="term" value="F:tRNA binding"/>
    <property type="evidence" value="ECO:0007669"/>
    <property type="project" value="UniProtKB-UniRule"/>
</dbReference>
<dbReference type="GO" id="GO:0006412">
    <property type="term" value="P:translation"/>
    <property type="evidence" value="ECO:0007669"/>
    <property type="project" value="UniProtKB-UniRule"/>
</dbReference>
<dbReference type="CDD" id="cd03368">
    <property type="entry name" value="Ribosomal_S12"/>
    <property type="match status" value="1"/>
</dbReference>
<dbReference type="FunFam" id="2.40.50.140:FF:000001">
    <property type="entry name" value="30S ribosomal protein S12"/>
    <property type="match status" value="1"/>
</dbReference>
<dbReference type="Gene3D" id="2.40.50.140">
    <property type="entry name" value="Nucleic acid-binding proteins"/>
    <property type="match status" value="1"/>
</dbReference>
<dbReference type="HAMAP" id="MF_00403_B">
    <property type="entry name" value="Ribosomal_uS12_B"/>
    <property type="match status" value="1"/>
</dbReference>
<dbReference type="InterPro" id="IPR012340">
    <property type="entry name" value="NA-bd_OB-fold"/>
</dbReference>
<dbReference type="InterPro" id="IPR006032">
    <property type="entry name" value="Ribosomal_uS12"/>
</dbReference>
<dbReference type="InterPro" id="IPR005679">
    <property type="entry name" value="Ribosomal_uS12_bac"/>
</dbReference>
<dbReference type="NCBIfam" id="TIGR00981">
    <property type="entry name" value="rpsL_bact"/>
    <property type="match status" value="1"/>
</dbReference>
<dbReference type="PANTHER" id="PTHR11652">
    <property type="entry name" value="30S RIBOSOMAL PROTEIN S12 FAMILY MEMBER"/>
    <property type="match status" value="1"/>
</dbReference>
<dbReference type="Pfam" id="PF00164">
    <property type="entry name" value="Ribosom_S12_S23"/>
    <property type="match status" value="1"/>
</dbReference>
<dbReference type="PIRSF" id="PIRSF002133">
    <property type="entry name" value="Ribosomal_S12/S23"/>
    <property type="match status" value="1"/>
</dbReference>
<dbReference type="PRINTS" id="PR01034">
    <property type="entry name" value="RIBOSOMALS12"/>
</dbReference>
<dbReference type="SUPFAM" id="SSF50249">
    <property type="entry name" value="Nucleic acid-binding proteins"/>
    <property type="match status" value="1"/>
</dbReference>
<dbReference type="PROSITE" id="PS00055">
    <property type="entry name" value="RIBOSOMAL_S12"/>
    <property type="match status" value="1"/>
</dbReference>
<name>RS12_MYCAV</name>
<accession>P51999</accession>
<accession>Q9R5U7</accession>
<keyword id="KW-0488">Methylation</keyword>
<keyword id="KW-0687">Ribonucleoprotein</keyword>
<keyword id="KW-0689">Ribosomal protein</keyword>
<keyword id="KW-0694">RNA-binding</keyword>
<keyword id="KW-0699">rRNA-binding</keyword>
<keyword id="KW-0820">tRNA-binding</keyword>